<dbReference type="EC" id="3.1.4.14" evidence="1"/>
<dbReference type="EMBL" id="AM933173">
    <property type="protein sequence ID" value="CAR36314.1"/>
    <property type="molecule type" value="Genomic_DNA"/>
</dbReference>
<dbReference type="RefSeq" id="WP_001009858.1">
    <property type="nucleotide sequence ID" value="NC_011274.1"/>
</dbReference>
<dbReference type="SMR" id="B5R6Q5"/>
<dbReference type="KEGG" id="seg:SG0415"/>
<dbReference type="HOGENOM" id="CLU_099370_1_0_6"/>
<dbReference type="Proteomes" id="UP000008321">
    <property type="component" value="Chromosome"/>
</dbReference>
<dbReference type="GO" id="GO:0008770">
    <property type="term" value="F:[acyl-carrier-protein] phosphodiesterase activity"/>
    <property type="evidence" value="ECO:0007669"/>
    <property type="project" value="UniProtKB-UniRule"/>
</dbReference>
<dbReference type="GO" id="GO:0006633">
    <property type="term" value="P:fatty acid biosynthetic process"/>
    <property type="evidence" value="ECO:0007669"/>
    <property type="project" value="UniProtKB-UniRule"/>
</dbReference>
<dbReference type="HAMAP" id="MF_01950">
    <property type="entry name" value="AcpH"/>
    <property type="match status" value="1"/>
</dbReference>
<dbReference type="InterPro" id="IPR007431">
    <property type="entry name" value="ACP_PD"/>
</dbReference>
<dbReference type="InterPro" id="IPR023491">
    <property type="entry name" value="ACP_phosphodiesterase_gpbac"/>
</dbReference>
<dbReference type="NCBIfam" id="NF007466">
    <property type="entry name" value="PRK10045.1"/>
    <property type="match status" value="1"/>
</dbReference>
<dbReference type="PANTHER" id="PTHR38764">
    <property type="entry name" value="ACYL CARRIER PROTEIN PHOSPHODIESTERASE"/>
    <property type="match status" value="1"/>
</dbReference>
<dbReference type="PANTHER" id="PTHR38764:SF1">
    <property type="entry name" value="ACYL CARRIER PROTEIN PHOSPHODIESTERASE"/>
    <property type="match status" value="1"/>
</dbReference>
<dbReference type="Pfam" id="PF04336">
    <property type="entry name" value="ACP_PD"/>
    <property type="match status" value="1"/>
</dbReference>
<dbReference type="PIRSF" id="PIRSF011489">
    <property type="entry name" value="DUF479"/>
    <property type="match status" value="1"/>
</dbReference>
<evidence type="ECO:0000255" key="1">
    <source>
        <dbReference type="HAMAP-Rule" id="MF_01950"/>
    </source>
</evidence>
<protein>
    <recommendedName>
        <fullName evidence="1">Acyl carrier protein phosphodiesterase</fullName>
        <shortName evidence="1">ACP phosphodiesterase</shortName>
        <ecNumber evidence="1">3.1.4.14</ecNumber>
    </recommendedName>
</protein>
<name>ACPH_SALG2</name>
<reference key="1">
    <citation type="journal article" date="2008" name="Genome Res.">
        <title>Comparative genome analysis of Salmonella enteritidis PT4 and Salmonella gallinarum 287/91 provides insights into evolutionary and host adaptation pathways.</title>
        <authorList>
            <person name="Thomson N.R."/>
            <person name="Clayton D.J."/>
            <person name="Windhorst D."/>
            <person name="Vernikos G."/>
            <person name="Davidson S."/>
            <person name="Churcher C."/>
            <person name="Quail M.A."/>
            <person name="Stevens M."/>
            <person name="Jones M.A."/>
            <person name="Watson M."/>
            <person name="Barron A."/>
            <person name="Layton A."/>
            <person name="Pickard D."/>
            <person name="Kingsley R.A."/>
            <person name="Bignell A."/>
            <person name="Clark L."/>
            <person name="Harris B."/>
            <person name="Ormond D."/>
            <person name="Abdellah Z."/>
            <person name="Brooks K."/>
            <person name="Cherevach I."/>
            <person name="Chillingworth T."/>
            <person name="Woodward J."/>
            <person name="Norberczak H."/>
            <person name="Lord A."/>
            <person name="Arrowsmith C."/>
            <person name="Jagels K."/>
            <person name="Moule S."/>
            <person name="Mungall K."/>
            <person name="Saunders M."/>
            <person name="Whitehead S."/>
            <person name="Chabalgoity J.A."/>
            <person name="Maskell D."/>
            <person name="Humphreys T."/>
            <person name="Roberts M."/>
            <person name="Barrow P.A."/>
            <person name="Dougan G."/>
            <person name="Parkhill J."/>
        </authorList>
    </citation>
    <scope>NUCLEOTIDE SEQUENCE [LARGE SCALE GENOMIC DNA]</scope>
    <source>
        <strain>287/91 / NCTC 13346</strain>
    </source>
</reference>
<accession>B5R6Q5</accession>
<organism>
    <name type="scientific">Salmonella gallinarum (strain 287/91 / NCTC 13346)</name>
    <dbReference type="NCBI Taxonomy" id="550538"/>
    <lineage>
        <taxon>Bacteria</taxon>
        <taxon>Pseudomonadati</taxon>
        <taxon>Pseudomonadota</taxon>
        <taxon>Gammaproteobacteria</taxon>
        <taxon>Enterobacterales</taxon>
        <taxon>Enterobacteriaceae</taxon>
        <taxon>Salmonella</taxon>
    </lineage>
</organism>
<comment type="function">
    <text evidence="1">Converts holo-ACP to apo-ACP by hydrolytic cleavage of the phosphopantetheine prosthetic group from ACP.</text>
</comment>
<comment type="catalytic activity">
    <reaction evidence="1">
        <text>holo-[ACP] + H2O = apo-[ACP] + (R)-4'-phosphopantetheine + H(+)</text>
        <dbReference type="Rhea" id="RHEA:20537"/>
        <dbReference type="Rhea" id="RHEA-COMP:9685"/>
        <dbReference type="Rhea" id="RHEA-COMP:9690"/>
        <dbReference type="ChEBI" id="CHEBI:15377"/>
        <dbReference type="ChEBI" id="CHEBI:15378"/>
        <dbReference type="ChEBI" id="CHEBI:29999"/>
        <dbReference type="ChEBI" id="CHEBI:61723"/>
        <dbReference type="ChEBI" id="CHEBI:64479"/>
        <dbReference type="EC" id="3.1.4.14"/>
    </reaction>
</comment>
<comment type="similarity">
    <text evidence="1">Belongs to the AcpH family.</text>
</comment>
<proteinExistence type="inferred from homology"/>
<sequence>MNFLAHLHLAHLADSSLSGNLLADFVRGNPATHYPPDVVEGIYMHRRIDVMTDNLPEVREAREWFRHETRRVAPITLDVMWDHFLSRHWTQISPDFPLQAFVGYAHAQVATILPDSPPRFVNLNDYLWSEKWLERYRDMDFIQNVLNGMANRRPRLDALRDSWYDLDAHYDALEERFWHFYPRMMAQAARKAL</sequence>
<gene>
    <name evidence="1" type="primary">acpH</name>
    <name type="ordered locus">SG0415</name>
</gene>
<feature type="chain" id="PRO_1000188813" description="Acyl carrier protein phosphodiesterase">
    <location>
        <begin position="1"/>
        <end position="193"/>
    </location>
</feature>
<keyword id="KW-0275">Fatty acid biosynthesis</keyword>
<keyword id="KW-0276">Fatty acid metabolism</keyword>
<keyword id="KW-0378">Hydrolase</keyword>
<keyword id="KW-0444">Lipid biosynthesis</keyword>
<keyword id="KW-0443">Lipid metabolism</keyword>